<evidence type="ECO:0000250" key="1"/>
<evidence type="ECO:0000269" key="2">
    <source>
    </source>
</evidence>
<evidence type="ECO:0000305" key="3"/>
<evidence type="ECO:0007829" key="4">
    <source>
        <dbReference type="PDB" id="2FGQ"/>
    </source>
</evidence>
<protein>
    <recommendedName>
        <fullName>Outer membrane porin protein 32</fullName>
        <shortName>OMP32</shortName>
    </recommendedName>
</protein>
<feature type="signal peptide">
    <location>
        <begin position="1"/>
        <end position="19"/>
    </location>
</feature>
<feature type="chain" id="PRO_0000025213" description="Outer membrane porin protein 32">
    <location>
        <begin position="20"/>
        <end position="351"/>
    </location>
</feature>
<feature type="modified residue" description="Pyrrolidone carboxylic acid" evidence="2">
    <location>
        <position position="20"/>
    </location>
</feature>
<feature type="strand" evidence="4">
    <location>
        <begin position="23"/>
        <end position="37"/>
    </location>
</feature>
<feature type="strand" evidence="4">
    <location>
        <begin position="45"/>
        <end position="50"/>
    </location>
</feature>
<feature type="strand" evidence="4">
    <location>
        <begin position="52"/>
        <end position="54"/>
    </location>
</feature>
<feature type="strand" evidence="4">
    <location>
        <begin position="57"/>
        <end position="67"/>
    </location>
</feature>
<feature type="strand" evidence="4">
    <location>
        <begin position="70"/>
        <end position="79"/>
    </location>
</feature>
<feature type="turn" evidence="4">
    <location>
        <begin position="82"/>
        <end position="85"/>
    </location>
</feature>
<feature type="strand" evidence="4">
    <location>
        <begin position="94"/>
        <end position="102"/>
    </location>
</feature>
<feature type="strand" evidence="4">
    <location>
        <begin position="105"/>
        <end position="113"/>
    </location>
</feature>
<feature type="helix" evidence="4">
    <location>
        <begin position="115"/>
        <end position="120"/>
    </location>
</feature>
<feature type="helix" evidence="4">
    <location>
        <begin position="121"/>
        <end position="123"/>
    </location>
</feature>
<feature type="turn" evidence="4">
    <location>
        <begin position="125"/>
        <end position="128"/>
    </location>
</feature>
<feature type="strand" evidence="4">
    <location>
        <begin position="130"/>
        <end position="133"/>
    </location>
</feature>
<feature type="turn" evidence="4">
    <location>
        <begin position="146"/>
        <end position="149"/>
    </location>
</feature>
<feature type="strand" evidence="4">
    <location>
        <begin position="150"/>
        <end position="160"/>
    </location>
</feature>
<feature type="strand" evidence="4">
    <location>
        <begin position="167"/>
        <end position="174"/>
    </location>
</feature>
<feature type="strand" evidence="4">
    <location>
        <begin position="184"/>
        <end position="186"/>
    </location>
</feature>
<feature type="strand" evidence="4">
    <location>
        <begin position="190"/>
        <end position="198"/>
    </location>
</feature>
<feature type="strand" evidence="4">
    <location>
        <begin position="200"/>
        <end position="215"/>
    </location>
</feature>
<feature type="strand" evidence="4">
    <location>
        <begin position="218"/>
        <end position="232"/>
    </location>
</feature>
<feature type="strand" evidence="4">
    <location>
        <begin position="237"/>
        <end position="249"/>
    </location>
</feature>
<feature type="strand" evidence="4">
    <location>
        <begin position="254"/>
        <end position="268"/>
    </location>
</feature>
<feature type="turn" evidence="4">
    <location>
        <begin position="269"/>
        <end position="271"/>
    </location>
</feature>
<feature type="strand" evidence="4">
    <location>
        <begin position="272"/>
        <end position="283"/>
    </location>
</feature>
<feature type="helix" evidence="4">
    <location>
        <begin position="284"/>
        <end position="286"/>
    </location>
</feature>
<feature type="strand" evidence="4">
    <location>
        <begin position="288"/>
        <end position="316"/>
    </location>
</feature>
<feature type="turn" evidence="4">
    <location>
        <begin position="327"/>
        <end position="329"/>
    </location>
</feature>
<feature type="strand" evidence="4">
    <location>
        <begin position="339"/>
        <end position="351"/>
    </location>
</feature>
<reference key="1">
    <citation type="journal article" date="1991" name="J. Bacteriol.">
        <title>Nucleotide and derived amino acid sequences of the major porin of Comamonas acidovorans and comparison of porin primary structures.</title>
        <authorList>
            <person name="Gerbl-Rieger S."/>
            <person name="Peters J."/>
            <person name="Kellermann J."/>
            <person name="Lottspeich F."/>
            <person name="Baumeister W."/>
        </authorList>
    </citation>
    <scope>NUCLEOTIDE SEQUENCE [GENOMIC DNA]</scope>
    <scope>PARTIAL PROTEIN SEQUENCE</scope>
    <scope>PYROGLUTAMATE FORMATION AT GLN-20</scope>
    <source>
        <strain>ATCC 15668 / DSM 39 / BCRC 14819 / JCM 5833 / NBRC 14950 / NCIMB 9681 / NCTC 10683 / 2167</strain>
    </source>
</reference>
<organism>
    <name type="scientific">Delftia acidovorans</name>
    <name type="common">Pseudomonas acidovorans</name>
    <name type="synonym">Comamonas acidovorans</name>
    <dbReference type="NCBI Taxonomy" id="80866"/>
    <lineage>
        <taxon>Bacteria</taxon>
        <taxon>Pseudomonadati</taxon>
        <taxon>Pseudomonadota</taxon>
        <taxon>Betaproteobacteria</taxon>
        <taxon>Burkholderiales</taxon>
        <taxon>Comamonadaceae</taxon>
        <taxon>Delftia</taxon>
    </lineage>
</organism>
<gene>
    <name type="primary">omp32</name>
</gene>
<keyword id="KW-0002">3D-structure</keyword>
<keyword id="KW-0998">Cell outer membrane</keyword>
<keyword id="KW-0903">Direct protein sequencing</keyword>
<keyword id="KW-0406">Ion transport</keyword>
<keyword id="KW-0472">Membrane</keyword>
<keyword id="KW-0626">Porin</keyword>
<keyword id="KW-0873">Pyrrolidone carboxylic acid</keyword>
<keyword id="KW-0732">Signal</keyword>
<keyword id="KW-0812">Transmembrane</keyword>
<keyword id="KW-1134">Transmembrane beta strand</keyword>
<keyword id="KW-0813">Transport</keyword>
<proteinExistence type="evidence at protein level"/>
<dbReference type="PIR" id="A38528">
    <property type="entry name" value="A38528"/>
</dbReference>
<dbReference type="RefSeq" id="WP_034397082.1">
    <property type="nucleotide sequence ID" value="NZ_CP066006.1"/>
</dbReference>
<dbReference type="PDB" id="1E54">
    <property type="method" value="X-ray"/>
    <property type="resolution" value="2.10 A"/>
    <property type="chains" value="A=20-351"/>
</dbReference>
<dbReference type="PDB" id="2FGQ">
    <property type="method" value="X-ray"/>
    <property type="resolution" value="1.45 A"/>
    <property type="chains" value="X=20-351"/>
</dbReference>
<dbReference type="PDB" id="2FGR">
    <property type="method" value="X-ray"/>
    <property type="resolution" value="1.50 A"/>
    <property type="chains" value="A=20-351"/>
</dbReference>
<dbReference type="PDBsum" id="1E54"/>
<dbReference type="PDBsum" id="2FGQ"/>
<dbReference type="PDBsum" id="2FGR"/>
<dbReference type="SMR" id="P24305"/>
<dbReference type="TCDB" id="1.B.1.6.1">
    <property type="family name" value="the general bacterial porin (gbp) family"/>
</dbReference>
<dbReference type="EvolutionaryTrace" id="P24305"/>
<dbReference type="GO" id="GO:0009279">
    <property type="term" value="C:cell outer membrane"/>
    <property type="evidence" value="ECO:0007669"/>
    <property type="project" value="UniProtKB-SubCell"/>
</dbReference>
<dbReference type="GO" id="GO:0046930">
    <property type="term" value="C:pore complex"/>
    <property type="evidence" value="ECO:0007669"/>
    <property type="project" value="UniProtKB-KW"/>
</dbReference>
<dbReference type="GO" id="GO:0015288">
    <property type="term" value="F:porin activity"/>
    <property type="evidence" value="ECO:0007669"/>
    <property type="project" value="UniProtKB-KW"/>
</dbReference>
<dbReference type="GO" id="GO:0006811">
    <property type="term" value="P:monoatomic ion transport"/>
    <property type="evidence" value="ECO:0007669"/>
    <property type="project" value="UniProtKB-KW"/>
</dbReference>
<dbReference type="CDD" id="cd00342">
    <property type="entry name" value="gram_neg_porins"/>
    <property type="match status" value="1"/>
</dbReference>
<dbReference type="Gene3D" id="2.40.160.10">
    <property type="entry name" value="Porin"/>
    <property type="match status" value="1"/>
</dbReference>
<dbReference type="InterPro" id="IPR050298">
    <property type="entry name" value="Gram-neg_bact_OMP"/>
</dbReference>
<dbReference type="InterPro" id="IPR033900">
    <property type="entry name" value="Gram_neg_porin_domain"/>
</dbReference>
<dbReference type="InterPro" id="IPR023614">
    <property type="entry name" value="Porin_dom_sf"/>
</dbReference>
<dbReference type="InterPro" id="IPR002299">
    <property type="entry name" value="Porin_Neis"/>
</dbReference>
<dbReference type="PANTHER" id="PTHR34501:SF9">
    <property type="entry name" value="MAJOR OUTER MEMBRANE PROTEIN P.IA"/>
    <property type="match status" value="1"/>
</dbReference>
<dbReference type="PANTHER" id="PTHR34501">
    <property type="entry name" value="PROTEIN YDDL-RELATED"/>
    <property type="match status" value="1"/>
</dbReference>
<dbReference type="Pfam" id="PF13609">
    <property type="entry name" value="Porin_4"/>
    <property type="match status" value="1"/>
</dbReference>
<dbReference type="PRINTS" id="PR00184">
    <property type="entry name" value="NEISSPPORIN"/>
</dbReference>
<dbReference type="SUPFAM" id="SSF56935">
    <property type="entry name" value="Porins"/>
    <property type="match status" value="1"/>
</dbReference>
<sequence>MKKSLIALAVLAASGAAMAQSSVTLFGIVDTNVAYVNKDAAGDSRYGLGTSGASTSRLGLRGTEDLGGGLKAGFWLEGEIFGDDGNASGFNFKRRSTVSLSGNFGEVRLGRDLVPTSQKLTSYDLFSATGIGPFMGFRNWAAGQGADDNGIRANNLISYYTPNFGGFNAGFGYAFDEKQTIGTADSVGRYIGGYVAYDNGPLSASLGLAQQKTAVGGLATDRDEITLGASYNFGVAKLSGLLQQTKFKRDIGGDIKTNSYMLGASAPVGGVGEVKLQYALYDQKAIDSKAHQITLGYVHNLSKRTALYGNLAFLKNKDASTLGLQAKGVYAGGVQAGESQTGVQVGIRHAF</sequence>
<accession>P24305</accession>
<comment type="function">
    <text>Forms anion selective channels.</text>
</comment>
<comment type="subunit">
    <text evidence="1">Homotrimer.</text>
</comment>
<comment type="subcellular location">
    <subcellularLocation>
        <location>Cell outer membrane</location>
        <topology>Multi-pass membrane protein</topology>
    </subcellularLocation>
</comment>
<comment type="similarity">
    <text evidence="3">To bacterial outer membrane proteins and porins.</text>
</comment>
<name>OMP32_DELAC</name>